<dbReference type="EC" id="3.5.2.7" evidence="1"/>
<dbReference type="EMBL" id="AE015927">
    <property type="protein sequence ID" value="AAO36796.1"/>
    <property type="molecule type" value="Genomic_DNA"/>
</dbReference>
<dbReference type="RefSeq" id="WP_011100457.1">
    <property type="nucleotide sequence ID" value="NC_004557.1"/>
</dbReference>
<dbReference type="SMR" id="Q891P9"/>
<dbReference type="STRING" id="212717.CTC_02320"/>
<dbReference type="GeneID" id="24253202"/>
<dbReference type="KEGG" id="ctc:CTC_02320"/>
<dbReference type="HOGENOM" id="CLU_041647_0_1_9"/>
<dbReference type="OrthoDB" id="9776455at2"/>
<dbReference type="UniPathway" id="UPA00379">
    <property type="reaction ID" value="UER00551"/>
</dbReference>
<dbReference type="Proteomes" id="UP000001412">
    <property type="component" value="Chromosome"/>
</dbReference>
<dbReference type="GO" id="GO:0005737">
    <property type="term" value="C:cytoplasm"/>
    <property type="evidence" value="ECO:0007669"/>
    <property type="project" value="UniProtKB-SubCell"/>
</dbReference>
<dbReference type="GO" id="GO:0050480">
    <property type="term" value="F:imidazolonepropionase activity"/>
    <property type="evidence" value="ECO:0007669"/>
    <property type="project" value="UniProtKB-UniRule"/>
</dbReference>
<dbReference type="GO" id="GO:0005506">
    <property type="term" value="F:iron ion binding"/>
    <property type="evidence" value="ECO:0007669"/>
    <property type="project" value="UniProtKB-UniRule"/>
</dbReference>
<dbReference type="GO" id="GO:0008270">
    <property type="term" value="F:zinc ion binding"/>
    <property type="evidence" value="ECO:0007669"/>
    <property type="project" value="UniProtKB-UniRule"/>
</dbReference>
<dbReference type="GO" id="GO:0019556">
    <property type="term" value="P:L-histidine catabolic process to glutamate and formamide"/>
    <property type="evidence" value="ECO:0007669"/>
    <property type="project" value="UniProtKB-UniPathway"/>
</dbReference>
<dbReference type="GO" id="GO:0019557">
    <property type="term" value="P:L-histidine catabolic process to glutamate and formate"/>
    <property type="evidence" value="ECO:0007669"/>
    <property type="project" value="UniProtKB-UniPathway"/>
</dbReference>
<dbReference type="CDD" id="cd01296">
    <property type="entry name" value="Imidazolone-5PH"/>
    <property type="match status" value="1"/>
</dbReference>
<dbReference type="FunFam" id="3.20.20.140:FF:000007">
    <property type="entry name" value="Imidazolonepropionase"/>
    <property type="match status" value="1"/>
</dbReference>
<dbReference type="Gene3D" id="3.20.20.140">
    <property type="entry name" value="Metal-dependent hydrolases"/>
    <property type="match status" value="1"/>
</dbReference>
<dbReference type="Gene3D" id="2.30.40.10">
    <property type="entry name" value="Urease, subunit C, domain 1"/>
    <property type="match status" value="1"/>
</dbReference>
<dbReference type="HAMAP" id="MF_00372">
    <property type="entry name" value="HutI"/>
    <property type="match status" value="1"/>
</dbReference>
<dbReference type="InterPro" id="IPR006680">
    <property type="entry name" value="Amidohydro-rel"/>
</dbReference>
<dbReference type="InterPro" id="IPR005920">
    <property type="entry name" value="HutI"/>
</dbReference>
<dbReference type="InterPro" id="IPR011059">
    <property type="entry name" value="Metal-dep_hydrolase_composite"/>
</dbReference>
<dbReference type="InterPro" id="IPR032466">
    <property type="entry name" value="Metal_Hydrolase"/>
</dbReference>
<dbReference type="NCBIfam" id="TIGR01224">
    <property type="entry name" value="hutI"/>
    <property type="match status" value="1"/>
</dbReference>
<dbReference type="PANTHER" id="PTHR42752">
    <property type="entry name" value="IMIDAZOLONEPROPIONASE"/>
    <property type="match status" value="1"/>
</dbReference>
<dbReference type="PANTHER" id="PTHR42752:SF1">
    <property type="entry name" value="IMIDAZOLONEPROPIONASE-RELATED"/>
    <property type="match status" value="1"/>
</dbReference>
<dbReference type="Pfam" id="PF01979">
    <property type="entry name" value="Amidohydro_1"/>
    <property type="match status" value="1"/>
</dbReference>
<dbReference type="SUPFAM" id="SSF51338">
    <property type="entry name" value="Composite domain of metallo-dependent hydrolases"/>
    <property type="match status" value="1"/>
</dbReference>
<dbReference type="SUPFAM" id="SSF51556">
    <property type="entry name" value="Metallo-dependent hydrolases"/>
    <property type="match status" value="1"/>
</dbReference>
<accession>Q891P9</accession>
<name>HUTI_CLOTE</name>
<proteinExistence type="inferred from homology"/>
<gene>
    <name evidence="1" type="primary">hutI</name>
    <name type="ordered locus">CTC_02320</name>
</gene>
<sequence length="419" mass="46125">MKKGNVIIKNASQVITCSGFEGKFGKDMNNINVIENASVVVEDGIIKEIGSLEDILKKYNEKHFEIVDASNKAVLPGFVDSHTHFVFGGFRAEEFSWRLNGESYMDIMNKGGGIVNSVRGTREATEDELYESAKKRLDSMIHFGVTTVEGKSGYGLDYETELKQLRVMDRLQKDHSIDICKTFMGAHATPEEYRGRNEEYINFIIEDVLPKVAEEKLAEFCDVFCEEGVFSVEESRKILLKAKELGMKIKLHADEIVQLGGAELAAELGATSADHLLHASDEGIKAMADKKVIATLLPTTAFCLKEPFARARMMIDKGGAVALGTDFNPGSGFTNSIPLMFALATIYMDMSIEEAISAMTINGAAAIGRAETIGSIDKGKKGDLVILEYPSYKFLPYNTGVNIVETVIKDGNIVYKKSY</sequence>
<evidence type="ECO:0000255" key="1">
    <source>
        <dbReference type="HAMAP-Rule" id="MF_00372"/>
    </source>
</evidence>
<feature type="chain" id="PRO_0000306457" description="Imidazolonepropionase">
    <location>
        <begin position="1"/>
        <end position="419"/>
    </location>
</feature>
<feature type="binding site" evidence="1">
    <location>
        <position position="82"/>
    </location>
    <ligand>
        <name>Fe(3+)</name>
        <dbReference type="ChEBI" id="CHEBI:29034"/>
    </ligand>
</feature>
<feature type="binding site" evidence="1">
    <location>
        <position position="82"/>
    </location>
    <ligand>
        <name>Zn(2+)</name>
        <dbReference type="ChEBI" id="CHEBI:29105"/>
    </ligand>
</feature>
<feature type="binding site" evidence="1">
    <location>
        <position position="84"/>
    </location>
    <ligand>
        <name>Fe(3+)</name>
        <dbReference type="ChEBI" id="CHEBI:29034"/>
    </ligand>
</feature>
<feature type="binding site" evidence="1">
    <location>
        <position position="84"/>
    </location>
    <ligand>
        <name>Zn(2+)</name>
        <dbReference type="ChEBI" id="CHEBI:29105"/>
    </ligand>
</feature>
<feature type="binding site" evidence="1">
    <location>
        <position position="91"/>
    </location>
    <ligand>
        <name>4-imidazolone-5-propanoate</name>
        <dbReference type="ChEBI" id="CHEBI:77893"/>
    </ligand>
</feature>
<feature type="binding site" evidence="1">
    <location>
        <position position="154"/>
    </location>
    <ligand>
        <name>4-imidazolone-5-propanoate</name>
        <dbReference type="ChEBI" id="CHEBI:77893"/>
    </ligand>
</feature>
<feature type="binding site" evidence="1">
    <location>
        <position position="154"/>
    </location>
    <ligand>
        <name>N-formimidoyl-L-glutamate</name>
        <dbReference type="ChEBI" id="CHEBI:58928"/>
    </ligand>
</feature>
<feature type="binding site" evidence="1">
    <location>
        <position position="187"/>
    </location>
    <ligand>
        <name>4-imidazolone-5-propanoate</name>
        <dbReference type="ChEBI" id="CHEBI:77893"/>
    </ligand>
</feature>
<feature type="binding site" evidence="1">
    <location>
        <position position="252"/>
    </location>
    <ligand>
        <name>Fe(3+)</name>
        <dbReference type="ChEBI" id="CHEBI:29034"/>
    </ligand>
</feature>
<feature type="binding site" evidence="1">
    <location>
        <position position="252"/>
    </location>
    <ligand>
        <name>Zn(2+)</name>
        <dbReference type="ChEBI" id="CHEBI:29105"/>
    </ligand>
</feature>
<feature type="binding site" evidence="1">
    <location>
        <position position="255"/>
    </location>
    <ligand>
        <name>4-imidazolone-5-propanoate</name>
        <dbReference type="ChEBI" id="CHEBI:77893"/>
    </ligand>
</feature>
<feature type="binding site" evidence="1">
    <location>
        <position position="326"/>
    </location>
    <ligand>
        <name>Fe(3+)</name>
        <dbReference type="ChEBI" id="CHEBI:29034"/>
    </ligand>
</feature>
<feature type="binding site" evidence="1">
    <location>
        <position position="326"/>
    </location>
    <ligand>
        <name>Zn(2+)</name>
        <dbReference type="ChEBI" id="CHEBI:29105"/>
    </ligand>
</feature>
<feature type="binding site" evidence="1">
    <location>
        <position position="328"/>
    </location>
    <ligand>
        <name>N-formimidoyl-L-glutamate</name>
        <dbReference type="ChEBI" id="CHEBI:58928"/>
    </ligand>
</feature>
<feature type="binding site" evidence="1">
    <location>
        <position position="330"/>
    </location>
    <ligand>
        <name>N-formimidoyl-L-glutamate</name>
        <dbReference type="ChEBI" id="CHEBI:58928"/>
    </ligand>
</feature>
<feature type="binding site" evidence="1">
    <location>
        <position position="331"/>
    </location>
    <ligand>
        <name>4-imidazolone-5-propanoate</name>
        <dbReference type="ChEBI" id="CHEBI:77893"/>
    </ligand>
</feature>
<comment type="function">
    <text evidence="1">Catalyzes the hydrolytic cleavage of the carbon-nitrogen bond in imidazolone-5-propanoate to yield N-formimidoyl-L-glutamate. It is the third step in the universal histidine degradation pathway.</text>
</comment>
<comment type="catalytic activity">
    <reaction evidence="1">
        <text>4-imidazolone-5-propanoate + H2O = N-formimidoyl-L-glutamate</text>
        <dbReference type="Rhea" id="RHEA:23660"/>
        <dbReference type="ChEBI" id="CHEBI:15377"/>
        <dbReference type="ChEBI" id="CHEBI:58928"/>
        <dbReference type="ChEBI" id="CHEBI:77893"/>
        <dbReference type="EC" id="3.5.2.7"/>
    </reaction>
</comment>
<comment type="cofactor">
    <cofactor evidence="1">
        <name>Zn(2+)</name>
        <dbReference type="ChEBI" id="CHEBI:29105"/>
    </cofactor>
    <cofactor evidence="1">
        <name>Fe(3+)</name>
        <dbReference type="ChEBI" id="CHEBI:29034"/>
    </cofactor>
    <text evidence="1">Binds 1 zinc or iron ion per subunit.</text>
</comment>
<comment type="pathway">
    <text evidence="1">Amino-acid degradation; L-histidine degradation into L-glutamate; N-formimidoyl-L-glutamate from L-histidine: step 3/3.</text>
</comment>
<comment type="subcellular location">
    <subcellularLocation>
        <location evidence="1">Cytoplasm</location>
    </subcellularLocation>
</comment>
<comment type="similarity">
    <text evidence="1">Belongs to the metallo-dependent hydrolases superfamily. HutI family.</text>
</comment>
<organism>
    <name type="scientific">Clostridium tetani (strain Massachusetts / E88)</name>
    <dbReference type="NCBI Taxonomy" id="212717"/>
    <lineage>
        <taxon>Bacteria</taxon>
        <taxon>Bacillati</taxon>
        <taxon>Bacillota</taxon>
        <taxon>Clostridia</taxon>
        <taxon>Eubacteriales</taxon>
        <taxon>Clostridiaceae</taxon>
        <taxon>Clostridium</taxon>
    </lineage>
</organism>
<reference key="1">
    <citation type="journal article" date="2003" name="Proc. Natl. Acad. Sci. U.S.A.">
        <title>The genome sequence of Clostridium tetani, the causative agent of tetanus disease.</title>
        <authorList>
            <person name="Brueggemann H."/>
            <person name="Baeumer S."/>
            <person name="Fricke W.F."/>
            <person name="Wiezer A."/>
            <person name="Liesegang H."/>
            <person name="Decker I."/>
            <person name="Herzberg C."/>
            <person name="Martinez-Arias R."/>
            <person name="Merkl R."/>
            <person name="Henne A."/>
            <person name="Gottschalk G."/>
        </authorList>
    </citation>
    <scope>NUCLEOTIDE SEQUENCE [LARGE SCALE GENOMIC DNA]</scope>
    <source>
        <strain>Massachusetts / E88</strain>
    </source>
</reference>
<protein>
    <recommendedName>
        <fullName evidence="1">Imidazolonepropionase</fullName>
        <ecNumber evidence="1">3.5.2.7</ecNumber>
    </recommendedName>
    <alternativeName>
        <fullName evidence="1">Imidazolone-5-propionate hydrolase</fullName>
    </alternativeName>
</protein>
<keyword id="KW-0963">Cytoplasm</keyword>
<keyword id="KW-0369">Histidine metabolism</keyword>
<keyword id="KW-0378">Hydrolase</keyword>
<keyword id="KW-0408">Iron</keyword>
<keyword id="KW-0479">Metal-binding</keyword>
<keyword id="KW-1185">Reference proteome</keyword>
<keyword id="KW-0862">Zinc</keyword>